<sequence>MLIIAGLGNPGGKYAGNRHNIGFMAVDAIHRRHSFSPWSKKFRAEIAEGELGGEKVLLIKPQTFMNLSGEAVGEAMRFYKLQPADLVAIYDELDLPAGKARLKTGGGHGGHNGIKSLDAHCGKEYRRLRLGIGHPGIKEMVQNHVLGDFAKADKAWLEPLLDTLADNADMLVRNEDSQLMNKIALALGGKAEEEKPRKDNKTTEKKPAGQSHIHQARNHNQPKVLTTGPMADILKKMFGNKGE</sequence>
<keyword id="KW-0963">Cytoplasm</keyword>
<keyword id="KW-0378">Hydrolase</keyword>
<keyword id="KW-1185">Reference proteome</keyword>
<keyword id="KW-0694">RNA-binding</keyword>
<keyword id="KW-0820">tRNA-binding</keyword>
<protein>
    <recommendedName>
        <fullName evidence="1">Peptidyl-tRNA hydrolase</fullName>
        <shortName evidence="1">Pth</shortName>
        <ecNumber evidence="1">3.1.1.29</ecNumber>
    </recommendedName>
</protein>
<evidence type="ECO:0000255" key="1">
    <source>
        <dbReference type="HAMAP-Rule" id="MF_00083"/>
    </source>
</evidence>
<evidence type="ECO:0000256" key="2">
    <source>
        <dbReference type="SAM" id="MobiDB-lite"/>
    </source>
</evidence>
<feature type="chain" id="PRO_1000092975" description="Peptidyl-tRNA hydrolase">
    <location>
        <begin position="1"/>
        <end position="243"/>
    </location>
</feature>
<feature type="region of interest" description="Disordered" evidence="2">
    <location>
        <begin position="188"/>
        <end position="243"/>
    </location>
</feature>
<feature type="compositionally biased region" description="Basic and acidic residues" evidence="2">
    <location>
        <begin position="190"/>
        <end position="207"/>
    </location>
</feature>
<feature type="active site" description="Proton acceptor" evidence="1">
    <location>
        <position position="19"/>
    </location>
</feature>
<feature type="binding site" evidence="1">
    <location>
        <position position="14"/>
    </location>
    <ligand>
        <name>tRNA</name>
        <dbReference type="ChEBI" id="CHEBI:17843"/>
    </ligand>
</feature>
<feature type="binding site" evidence="1">
    <location>
        <position position="64"/>
    </location>
    <ligand>
        <name>tRNA</name>
        <dbReference type="ChEBI" id="CHEBI:17843"/>
    </ligand>
</feature>
<feature type="binding site" evidence="1">
    <location>
        <position position="66"/>
    </location>
    <ligand>
        <name>tRNA</name>
        <dbReference type="ChEBI" id="CHEBI:17843"/>
    </ligand>
</feature>
<feature type="binding site" evidence="1">
    <location>
        <position position="112"/>
    </location>
    <ligand>
        <name>tRNA</name>
        <dbReference type="ChEBI" id="CHEBI:17843"/>
    </ligand>
</feature>
<feature type="site" description="Discriminates between blocked and unblocked aminoacyl-tRNA" evidence="1">
    <location>
        <position position="9"/>
    </location>
</feature>
<feature type="site" description="Stabilizes the basic form of H active site to accept a proton" evidence="1">
    <location>
        <position position="91"/>
    </location>
</feature>
<dbReference type="EC" id="3.1.1.29" evidence="1"/>
<dbReference type="EMBL" id="CP001191">
    <property type="protein sequence ID" value="ACI56038.1"/>
    <property type="molecule type" value="Genomic_DNA"/>
</dbReference>
<dbReference type="RefSeq" id="WP_012558501.1">
    <property type="nucleotide sequence ID" value="NC_011369.1"/>
</dbReference>
<dbReference type="SMR" id="B5ZY55"/>
<dbReference type="STRING" id="395492.Rleg2_2768"/>
<dbReference type="KEGG" id="rlt:Rleg2_2768"/>
<dbReference type="eggNOG" id="COG0193">
    <property type="taxonomic scope" value="Bacteria"/>
</dbReference>
<dbReference type="HOGENOM" id="CLU_062456_1_1_5"/>
<dbReference type="Proteomes" id="UP000008330">
    <property type="component" value="Chromosome"/>
</dbReference>
<dbReference type="GO" id="GO:0005737">
    <property type="term" value="C:cytoplasm"/>
    <property type="evidence" value="ECO:0007669"/>
    <property type="project" value="UniProtKB-SubCell"/>
</dbReference>
<dbReference type="GO" id="GO:0004045">
    <property type="term" value="F:peptidyl-tRNA hydrolase activity"/>
    <property type="evidence" value="ECO:0007669"/>
    <property type="project" value="UniProtKB-UniRule"/>
</dbReference>
<dbReference type="GO" id="GO:0000049">
    <property type="term" value="F:tRNA binding"/>
    <property type="evidence" value="ECO:0007669"/>
    <property type="project" value="UniProtKB-UniRule"/>
</dbReference>
<dbReference type="GO" id="GO:0006515">
    <property type="term" value="P:protein quality control for misfolded or incompletely synthesized proteins"/>
    <property type="evidence" value="ECO:0007669"/>
    <property type="project" value="UniProtKB-UniRule"/>
</dbReference>
<dbReference type="GO" id="GO:0072344">
    <property type="term" value="P:rescue of stalled ribosome"/>
    <property type="evidence" value="ECO:0007669"/>
    <property type="project" value="UniProtKB-UniRule"/>
</dbReference>
<dbReference type="CDD" id="cd00462">
    <property type="entry name" value="PTH"/>
    <property type="match status" value="1"/>
</dbReference>
<dbReference type="FunFam" id="3.40.50.1470:FF:000001">
    <property type="entry name" value="Peptidyl-tRNA hydrolase"/>
    <property type="match status" value="1"/>
</dbReference>
<dbReference type="Gene3D" id="3.40.50.1470">
    <property type="entry name" value="Peptidyl-tRNA hydrolase"/>
    <property type="match status" value="1"/>
</dbReference>
<dbReference type="HAMAP" id="MF_00083">
    <property type="entry name" value="Pept_tRNA_hydro_bact"/>
    <property type="match status" value="1"/>
</dbReference>
<dbReference type="InterPro" id="IPR001328">
    <property type="entry name" value="Pept_tRNA_hydro"/>
</dbReference>
<dbReference type="InterPro" id="IPR018171">
    <property type="entry name" value="Pept_tRNA_hydro_CS"/>
</dbReference>
<dbReference type="InterPro" id="IPR036416">
    <property type="entry name" value="Pept_tRNA_hydro_sf"/>
</dbReference>
<dbReference type="NCBIfam" id="TIGR00447">
    <property type="entry name" value="pth"/>
    <property type="match status" value="1"/>
</dbReference>
<dbReference type="PANTHER" id="PTHR17224">
    <property type="entry name" value="PEPTIDYL-TRNA HYDROLASE"/>
    <property type="match status" value="1"/>
</dbReference>
<dbReference type="PANTHER" id="PTHR17224:SF1">
    <property type="entry name" value="PEPTIDYL-TRNA HYDROLASE"/>
    <property type="match status" value="1"/>
</dbReference>
<dbReference type="Pfam" id="PF01195">
    <property type="entry name" value="Pept_tRNA_hydro"/>
    <property type="match status" value="1"/>
</dbReference>
<dbReference type="SUPFAM" id="SSF53178">
    <property type="entry name" value="Peptidyl-tRNA hydrolase-like"/>
    <property type="match status" value="1"/>
</dbReference>
<dbReference type="PROSITE" id="PS01195">
    <property type="entry name" value="PEPT_TRNA_HYDROL_1"/>
    <property type="match status" value="1"/>
</dbReference>
<dbReference type="PROSITE" id="PS01196">
    <property type="entry name" value="PEPT_TRNA_HYDROL_2"/>
    <property type="match status" value="1"/>
</dbReference>
<organism>
    <name type="scientific">Rhizobium leguminosarum bv. trifolii (strain WSM2304)</name>
    <dbReference type="NCBI Taxonomy" id="395492"/>
    <lineage>
        <taxon>Bacteria</taxon>
        <taxon>Pseudomonadati</taxon>
        <taxon>Pseudomonadota</taxon>
        <taxon>Alphaproteobacteria</taxon>
        <taxon>Hyphomicrobiales</taxon>
        <taxon>Rhizobiaceae</taxon>
        <taxon>Rhizobium/Agrobacterium group</taxon>
        <taxon>Rhizobium</taxon>
    </lineage>
</organism>
<comment type="function">
    <text evidence="1">Hydrolyzes ribosome-free peptidyl-tRNAs (with 1 or more amino acids incorporated), which drop off the ribosome during protein synthesis, or as a result of ribosome stalling.</text>
</comment>
<comment type="function">
    <text evidence="1">Catalyzes the release of premature peptidyl moieties from peptidyl-tRNA molecules trapped in stalled 50S ribosomal subunits, and thus maintains levels of free tRNAs and 50S ribosomes.</text>
</comment>
<comment type="catalytic activity">
    <reaction evidence="1">
        <text>an N-acyl-L-alpha-aminoacyl-tRNA + H2O = an N-acyl-L-amino acid + a tRNA + H(+)</text>
        <dbReference type="Rhea" id="RHEA:54448"/>
        <dbReference type="Rhea" id="RHEA-COMP:10123"/>
        <dbReference type="Rhea" id="RHEA-COMP:13883"/>
        <dbReference type="ChEBI" id="CHEBI:15377"/>
        <dbReference type="ChEBI" id="CHEBI:15378"/>
        <dbReference type="ChEBI" id="CHEBI:59874"/>
        <dbReference type="ChEBI" id="CHEBI:78442"/>
        <dbReference type="ChEBI" id="CHEBI:138191"/>
        <dbReference type="EC" id="3.1.1.29"/>
    </reaction>
</comment>
<comment type="subunit">
    <text evidence="1">Monomer.</text>
</comment>
<comment type="subcellular location">
    <subcellularLocation>
        <location evidence="1">Cytoplasm</location>
    </subcellularLocation>
</comment>
<comment type="similarity">
    <text evidence="1">Belongs to the PTH family.</text>
</comment>
<proteinExistence type="inferred from homology"/>
<accession>B5ZY55</accession>
<name>PTH_RHILW</name>
<reference key="1">
    <citation type="journal article" date="2010" name="Stand. Genomic Sci.">
        <title>Complete genome sequence of Rhizobium leguminosarum bv trifolii strain WSM2304, an effective microsymbiont of the South American clover Trifolium polymorphum.</title>
        <authorList>
            <person name="Reeve W."/>
            <person name="O'Hara G."/>
            <person name="Chain P."/>
            <person name="Ardley J."/>
            <person name="Brau L."/>
            <person name="Nandesena K."/>
            <person name="Tiwari R."/>
            <person name="Malfatti S."/>
            <person name="Kiss H."/>
            <person name="Lapidus A."/>
            <person name="Copeland A."/>
            <person name="Nolan M."/>
            <person name="Land M."/>
            <person name="Ivanova N."/>
            <person name="Mavromatis K."/>
            <person name="Markowitz V."/>
            <person name="Kyrpides N."/>
            <person name="Melino V."/>
            <person name="Denton M."/>
            <person name="Yates R."/>
            <person name="Howieson J."/>
        </authorList>
    </citation>
    <scope>NUCLEOTIDE SEQUENCE [LARGE SCALE GENOMIC DNA]</scope>
    <source>
        <strain>WSM2304</strain>
    </source>
</reference>
<gene>
    <name evidence="1" type="primary">pth</name>
    <name type="ordered locus">Rleg2_2768</name>
</gene>